<feature type="chain" id="PRO_1000195344" description="Protein-export protein SecB">
    <location>
        <begin position="1"/>
        <end position="155"/>
    </location>
</feature>
<reference key="1">
    <citation type="journal article" date="2011" name="J. Bacteriol.">
        <title>Comparative genomics of 28 Salmonella enterica isolates: evidence for CRISPR-mediated adaptive sublineage evolution.</title>
        <authorList>
            <person name="Fricke W.F."/>
            <person name="Mammel M.K."/>
            <person name="McDermott P.F."/>
            <person name="Tartera C."/>
            <person name="White D.G."/>
            <person name="Leclerc J.E."/>
            <person name="Ravel J."/>
            <person name="Cebula T.A."/>
        </authorList>
    </citation>
    <scope>NUCLEOTIDE SEQUENCE [LARGE SCALE GENOMIC DNA]</scope>
    <source>
        <strain>SL254</strain>
    </source>
</reference>
<gene>
    <name evidence="1" type="primary">secB</name>
    <name type="ordered locus">SNSL254_A3981</name>
</gene>
<comment type="function">
    <text evidence="1">One of the proteins required for the normal export of preproteins out of the cell cytoplasm. It is a molecular chaperone that binds to a subset of precursor proteins, maintaining them in a translocation-competent state. It also specifically binds to its receptor SecA.</text>
</comment>
<comment type="subunit">
    <text evidence="1">Homotetramer, a dimer of dimers. One homotetramer interacts with 1 SecA dimer.</text>
</comment>
<comment type="subcellular location">
    <subcellularLocation>
        <location evidence="1">Cytoplasm</location>
    </subcellularLocation>
</comment>
<comment type="similarity">
    <text evidence="1">Belongs to the SecB family.</text>
</comment>
<keyword id="KW-0143">Chaperone</keyword>
<keyword id="KW-0963">Cytoplasm</keyword>
<keyword id="KW-0653">Protein transport</keyword>
<keyword id="KW-0811">Translocation</keyword>
<keyword id="KW-0813">Transport</keyword>
<name>SECB_SALNS</name>
<protein>
    <recommendedName>
        <fullName evidence="1">Protein-export protein SecB</fullName>
    </recommendedName>
</protein>
<organism>
    <name type="scientific">Salmonella newport (strain SL254)</name>
    <dbReference type="NCBI Taxonomy" id="423368"/>
    <lineage>
        <taxon>Bacteria</taxon>
        <taxon>Pseudomonadati</taxon>
        <taxon>Pseudomonadota</taxon>
        <taxon>Gammaproteobacteria</taxon>
        <taxon>Enterobacterales</taxon>
        <taxon>Enterobacteriaceae</taxon>
        <taxon>Salmonella</taxon>
    </lineage>
</organism>
<dbReference type="EMBL" id="CP001113">
    <property type="protein sequence ID" value="ACF63902.1"/>
    <property type="molecule type" value="Genomic_DNA"/>
</dbReference>
<dbReference type="RefSeq" id="WP_000003370.1">
    <property type="nucleotide sequence ID" value="NZ_CCMR01000004.1"/>
</dbReference>
<dbReference type="SMR" id="B4SXB2"/>
<dbReference type="KEGG" id="see:SNSL254_A3981"/>
<dbReference type="HOGENOM" id="CLU_111574_1_0_6"/>
<dbReference type="Proteomes" id="UP000008824">
    <property type="component" value="Chromosome"/>
</dbReference>
<dbReference type="GO" id="GO:0005737">
    <property type="term" value="C:cytoplasm"/>
    <property type="evidence" value="ECO:0007669"/>
    <property type="project" value="UniProtKB-SubCell"/>
</dbReference>
<dbReference type="GO" id="GO:0051082">
    <property type="term" value="F:unfolded protein binding"/>
    <property type="evidence" value="ECO:0007669"/>
    <property type="project" value="InterPro"/>
</dbReference>
<dbReference type="GO" id="GO:0006457">
    <property type="term" value="P:protein folding"/>
    <property type="evidence" value="ECO:0007669"/>
    <property type="project" value="UniProtKB-UniRule"/>
</dbReference>
<dbReference type="GO" id="GO:0051262">
    <property type="term" value="P:protein tetramerization"/>
    <property type="evidence" value="ECO:0007669"/>
    <property type="project" value="InterPro"/>
</dbReference>
<dbReference type="GO" id="GO:0015031">
    <property type="term" value="P:protein transport"/>
    <property type="evidence" value="ECO:0007669"/>
    <property type="project" value="UniProtKB-UniRule"/>
</dbReference>
<dbReference type="CDD" id="cd00557">
    <property type="entry name" value="Translocase_SecB"/>
    <property type="match status" value="1"/>
</dbReference>
<dbReference type="FunFam" id="3.10.420.10:FF:000001">
    <property type="entry name" value="Protein-export chaperone SecB"/>
    <property type="match status" value="1"/>
</dbReference>
<dbReference type="Gene3D" id="3.10.420.10">
    <property type="entry name" value="SecB-like"/>
    <property type="match status" value="1"/>
</dbReference>
<dbReference type="HAMAP" id="MF_00821">
    <property type="entry name" value="SecB"/>
    <property type="match status" value="1"/>
</dbReference>
<dbReference type="InterPro" id="IPR003708">
    <property type="entry name" value="SecB"/>
</dbReference>
<dbReference type="InterPro" id="IPR035958">
    <property type="entry name" value="SecB-like_sf"/>
</dbReference>
<dbReference type="NCBIfam" id="NF004390">
    <property type="entry name" value="PRK05751.1-1"/>
    <property type="match status" value="1"/>
</dbReference>
<dbReference type="NCBIfam" id="NF004393">
    <property type="entry name" value="PRK05751.1-4"/>
    <property type="match status" value="1"/>
</dbReference>
<dbReference type="NCBIfam" id="TIGR00809">
    <property type="entry name" value="secB"/>
    <property type="match status" value="1"/>
</dbReference>
<dbReference type="PANTHER" id="PTHR36918">
    <property type="match status" value="1"/>
</dbReference>
<dbReference type="PANTHER" id="PTHR36918:SF1">
    <property type="entry name" value="PROTEIN-EXPORT PROTEIN SECB"/>
    <property type="match status" value="1"/>
</dbReference>
<dbReference type="Pfam" id="PF02556">
    <property type="entry name" value="SecB"/>
    <property type="match status" value="1"/>
</dbReference>
<dbReference type="PRINTS" id="PR01594">
    <property type="entry name" value="SECBCHAPRONE"/>
</dbReference>
<dbReference type="SUPFAM" id="SSF54611">
    <property type="entry name" value="SecB-like"/>
    <property type="match status" value="1"/>
</dbReference>
<sequence length="155" mass="17245">MSEQNNTEMAFQIQRIYTKDVSFEAPNAPHVFQKDWQPEVKLDLDTASSQLADDVYEVVLRVTVTASLGEETAFLCEVQQAGIFSISGIEGTQMAHCLGAYCPNILFPYARECITSLVSRGTFPQLNLAPVNFDALFMNYLQQQAGEGTEEHQDA</sequence>
<evidence type="ECO:0000255" key="1">
    <source>
        <dbReference type="HAMAP-Rule" id="MF_00821"/>
    </source>
</evidence>
<proteinExistence type="inferred from homology"/>
<accession>B4SXB2</accession>